<feature type="chain" id="PRO_0000235900" description="Chaperone Ric-8B">
    <location>
        <begin position="1"/>
        <end position="520"/>
    </location>
</feature>
<feature type="modified residue" description="Phosphoserine" evidence="13">
    <location>
        <position position="468"/>
    </location>
</feature>
<feature type="modified residue" description="Phosphothreonine" evidence="13">
    <location>
        <position position="473"/>
    </location>
</feature>
<feature type="splice variant" id="VSP_039867" description="In isoform 1." evidence="7 8">
    <original>K</original>
    <variation>NINLITGHLEEPMPNPIDEMTEEQKEYEAMKLVNMLDKLSR</variation>
    <location>
        <position position="484"/>
    </location>
</feature>
<feature type="mutagenesis site" description="Reduced ability to fold GNAL." evidence="6">
    <original>R</original>
    <variation>E</variation>
    <location>
        <position position="71"/>
    </location>
</feature>
<feature type="mutagenesis site" description="Strongly reduced ability to fold GNAL." evidence="6">
    <original>R</original>
    <variation>E</variation>
    <location>
        <position position="75"/>
    </location>
</feature>
<feature type="mutagenesis site" description="Strongly reduced ability to fold GNAL." evidence="6">
    <original>N</original>
    <variation>A</variation>
    <location>
        <position position="123"/>
    </location>
</feature>
<feature type="mutagenesis site" description="Slightly reduced ability to fold GNAL." evidence="6">
    <original>F</original>
    <variation>A</variation>
    <location>
        <position position="126"/>
    </location>
</feature>
<feature type="mutagenesis site" description="Does not affect ability to fold GNAL." evidence="6">
    <original>F</original>
    <variation>A</variation>
    <location>
        <position position="163"/>
    </location>
</feature>
<feature type="mutagenesis site" description="Reduced ability to fold GNAL." evidence="6">
    <original>R</original>
    <variation>A</variation>
    <location>
        <position position="166"/>
    </location>
</feature>
<feature type="mutagenesis site" description="Reduced ability to fold GNAL." evidence="6">
    <original>E</original>
    <variation>A</variation>
    <location>
        <position position="400"/>
    </location>
</feature>
<feature type="mutagenesis site" description="Reduced ability to fold GNAL." evidence="6">
    <original>A</original>
    <variation>W</variation>
    <location>
        <position position="449"/>
    </location>
</feature>
<feature type="mutagenesis site" description="Does not affect ability to fold GNAL." evidence="6">
    <original>A</original>
    <variation>W</variation>
    <location>
        <position position="453"/>
    </location>
</feature>
<feature type="helix" evidence="14">
    <location>
        <begin position="4"/>
        <end position="10"/>
    </location>
</feature>
<feature type="helix" evidence="14">
    <location>
        <begin position="15"/>
        <end position="28"/>
    </location>
</feature>
<feature type="turn" evidence="14">
    <location>
        <begin position="29"/>
        <end position="31"/>
    </location>
</feature>
<feature type="helix" evidence="14">
    <location>
        <begin position="37"/>
        <end position="39"/>
    </location>
</feature>
<feature type="helix" evidence="14">
    <location>
        <begin position="40"/>
        <end position="55"/>
    </location>
</feature>
<feature type="helix" evidence="14">
    <location>
        <begin position="60"/>
        <end position="73"/>
    </location>
</feature>
<feature type="turn" evidence="15">
    <location>
        <begin position="77"/>
        <end position="80"/>
    </location>
</feature>
<feature type="helix" evidence="15">
    <location>
        <begin position="81"/>
        <end position="83"/>
    </location>
</feature>
<feature type="helix" evidence="14">
    <location>
        <begin position="86"/>
        <end position="95"/>
    </location>
</feature>
<feature type="helix" evidence="14">
    <location>
        <begin position="111"/>
        <end position="127"/>
    </location>
</feature>
<feature type="helix" evidence="14">
    <location>
        <begin position="130"/>
        <end position="137"/>
    </location>
</feature>
<feature type="helix" evidence="14">
    <location>
        <begin position="140"/>
        <end position="150"/>
    </location>
</feature>
<feature type="helix" evidence="14">
    <location>
        <begin position="158"/>
        <end position="174"/>
    </location>
</feature>
<feature type="helix" evidence="14">
    <location>
        <begin position="177"/>
        <end position="183"/>
    </location>
</feature>
<feature type="helix" evidence="14">
    <location>
        <begin position="188"/>
        <end position="200"/>
    </location>
</feature>
<feature type="strand" evidence="14">
    <location>
        <begin position="204"/>
        <end position="208"/>
    </location>
</feature>
<feature type="helix" evidence="14">
    <location>
        <begin position="221"/>
        <end position="237"/>
    </location>
</feature>
<feature type="turn" evidence="15">
    <location>
        <begin position="238"/>
        <end position="240"/>
    </location>
</feature>
<feature type="strand" evidence="15">
    <location>
        <begin position="241"/>
        <end position="244"/>
    </location>
</feature>
<feature type="helix" evidence="14">
    <location>
        <begin position="247"/>
        <end position="249"/>
    </location>
</feature>
<feature type="helix" evidence="14">
    <location>
        <begin position="250"/>
        <end position="263"/>
    </location>
</feature>
<feature type="helix" evidence="14">
    <location>
        <begin position="271"/>
        <end position="285"/>
    </location>
</feature>
<feature type="helix" evidence="14">
    <location>
        <begin position="290"/>
        <end position="296"/>
    </location>
</feature>
<feature type="strand" evidence="14">
    <location>
        <begin position="333"/>
        <end position="336"/>
    </location>
</feature>
<feature type="helix" evidence="14">
    <location>
        <begin position="340"/>
        <end position="354"/>
    </location>
</feature>
<feature type="helix" evidence="14">
    <location>
        <begin position="360"/>
        <end position="376"/>
    </location>
</feature>
<feature type="helix" evidence="14">
    <location>
        <begin position="378"/>
        <end position="388"/>
    </location>
</feature>
<feature type="strand" evidence="14">
    <location>
        <begin position="401"/>
        <end position="404"/>
    </location>
</feature>
<feature type="helix" evidence="14">
    <location>
        <begin position="405"/>
        <end position="411"/>
    </location>
</feature>
<feature type="helix" evidence="14">
    <location>
        <begin position="412"/>
        <end position="414"/>
    </location>
</feature>
<feature type="helix" evidence="14">
    <location>
        <begin position="418"/>
        <end position="431"/>
    </location>
</feature>
<feature type="turn" evidence="14">
    <location>
        <begin position="432"/>
        <end position="434"/>
    </location>
</feature>
<feature type="helix" evidence="14">
    <location>
        <begin position="436"/>
        <end position="442"/>
    </location>
</feature>
<feature type="turn" evidence="14">
    <location>
        <begin position="445"/>
        <end position="448"/>
    </location>
</feature>
<feature type="helix" evidence="14">
    <location>
        <begin position="449"/>
        <end position="455"/>
    </location>
</feature>
<feature type="helix" evidence="14">
    <location>
        <begin position="476"/>
        <end position="481"/>
    </location>
</feature>
<comment type="function">
    <text evidence="1 2 3 4 5 6">Chaperone that specifically binds and folds nascent G(s) G-alpha proteins (GNAS and GNAL) prior to G protein heterotrimer formation, promoting their association with the plasma membrane (PubMed:22114146, PubMed:36931277). Also acts as a guanine nucleotide exchange factor (GEF) for G(s) proteins by stimulating exchange of bound GDP for free GTP (PubMed:15829631, PubMed:16754875, PubMed:21467038, PubMed:22114146). Acts as an important component for odorant signal transduction by mediating GNAL (G(olf)-alpha) folding, thereby promoting-dependent cAMP accumulation in olfactory sensory neurons (PubMed:15829631, PubMed:16754875, PubMed:29118104).</text>
</comment>
<comment type="subunit">
    <text evidence="1 2 3 6">Interacts with GDP-bound G(s) G-alpha proteins GNAL and GNAS (PubMed:15829631, PubMed:16754875, PubMed:21467038, PubMed:36931277). Does not interact with G-alpha proteins when they are in complex with subunits beta and gamma (PubMed:15829631).</text>
</comment>
<comment type="subcellular location">
    <subcellularLocation>
        <location evidence="2 4">Cytoplasm</location>
        <location evidence="2 4">Cell cortex</location>
    </subcellularLocation>
    <text evidence="2">Localizes to the cell cortex.</text>
</comment>
<comment type="alternative products">
    <event type="alternative splicing"/>
    <isoform>
        <id>Q80XE1-2</id>
        <name>2</name>
        <name evidence="8">Delta-9</name>
        <sequence type="displayed"/>
    </isoform>
    <isoform>
        <id>Q80XE1-1</id>
        <name>1</name>
        <name evidence="8">Ric-8BFL</name>
        <sequence type="described" ref="VSP_039867"/>
    </isoform>
</comment>
<comment type="tissue specificity">
    <text evidence="1">Predominantly expressed in the mature olfactory sensory neurons and also in a few regions in the brain.</text>
</comment>
<comment type="disruption phenotype">
    <text evidence="4 5">Death during early embryonic development (PubMed:22114146). Conditional deletion in olfactory sensory neurons leads to death on the day after birth in the majority of the cases: surviving mice do not express GNAL (G(olf)-alpha) and are anosmic due to a strong reduction of mature olfactory sensory neurons, resulting in difficulty in suckling (PubMed:29118104).</text>
</comment>
<comment type="similarity">
    <text evidence="9">Belongs to the synembryn family.</text>
</comment>
<gene>
    <name evidence="8 10" type="primary">Ric8b</name>
</gene>
<reference key="1">
    <citation type="journal article" date="2005" name="J. Neurosci.">
        <title>Ric-8B, an olfactory putative GTP exchange factor, amplifies signal transduction through the olfactory-specific G-protein Galphaolf.</title>
        <authorList>
            <person name="Von Dannecker L.E.C."/>
            <person name="Mercadante A.F."/>
            <person name="Malnic B."/>
        </authorList>
    </citation>
    <scope>NUCLEOTIDE SEQUENCE [MRNA] (ISOFORMS 1 AND 2)</scope>
    <scope>FUNCTION</scope>
    <scope>TISSUE SPECIFICITY</scope>
    <scope>INTERACTION WITH GNAL</scope>
    <source>
        <strain>C57BL/6J</strain>
        <tissue>Olfactory epithelium</tissue>
    </source>
</reference>
<reference key="2">
    <citation type="journal article" date="2005" name="Science">
        <title>The transcriptional landscape of the mammalian genome.</title>
        <authorList>
            <person name="Carninci P."/>
            <person name="Kasukawa T."/>
            <person name="Katayama S."/>
            <person name="Gough J."/>
            <person name="Frith M.C."/>
            <person name="Maeda N."/>
            <person name="Oyama R."/>
            <person name="Ravasi T."/>
            <person name="Lenhard B."/>
            <person name="Wells C."/>
            <person name="Kodzius R."/>
            <person name="Shimokawa K."/>
            <person name="Bajic V.B."/>
            <person name="Brenner S.E."/>
            <person name="Batalov S."/>
            <person name="Forrest A.R."/>
            <person name="Zavolan M."/>
            <person name="Davis M.J."/>
            <person name="Wilming L.G."/>
            <person name="Aidinis V."/>
            <person name="Allen J.E."/>
            <person name="Ambesi-Impiombato A."/>
            <person name="Apweiler R."/>
            <person name="Aturaliya R.N."/>
            <person name="Bailey T.L."/>
            <person name="Bansal M."/>
            <person name="Baxter L."/>
            <person name="Beisel K.W."/>
            <person name="Bersano T."/>
            <person name="Bono H."/>
            <person name="Chalk A.M."/>
            <person name="Chiu K.P."/>
            <person name="Choudhary V."/>
            <person name="Christoffels A."/>
            <person name="Clutterbuck D.R."/>
            <person name="Crowe M.L."/>
            <person name="Dalla E."/>
            <person name="Dalrymple B.P."/>
            <person name="de Bono B."/>
            <person name="Della Gatta G."/>
            <person name="di Bernardo D."/>
            <person name="Down T."/>
            <person name="Engstrom P."/>
            <person name="Fagiolini M."/>
            <person name="Faulkner G."/>
            <person name="Fletcher C.F."/>
            <person name="Fukushima T."/>
            <person name="Furuno M."/>
            <person name="Futaki S."/>
            <person name="Gariboldi M."/>
            <person name="Georgii-Hemming P."/>
            <person name="Gingeras T.R."/>
            <person name="Gojobori T."/>
            <person name="Green R.E."/>
            <person name="Gustincich S."/>
            <person name="Harbers M."/>
            <person name="Hayashi Y."/>
            <person name="Hensch T.K."/>
            <person name="Hirokawa N."/>
            <person name="Hill D."/>
            <person name="Huminiecki L."/>
            <person name="Iacono M."/>
            <person name="Ikeo K."/>
            <person name="Iwama A."/>
            <person name="Ishikawa T."/>
            <person name="Jakt M."/>
            <person name="Kanapin A."/>
            <person name="Katoh M."/>
            <person name="Kawasawa Y."/>
            <person name="Kelso J."/>
            <person name="Kitamura H."/>
            <person name="Kitano H."/>
            <person name="Kollias G."/>
            <person name="Krishnan S.P."/>
            <person name="Kruger A."/>
            <person name="Kummerfeld S.K."/>
            <person name="Kurochkin I.V."/>
            <person name="Lareau L.F."/>
            <person name="Lazarevic D."/>
            <person name="Lipovich L."/>
            <person name="Liu J."/>
            <person name="Liuni S."/>
            <person name="McWilliam S."/>
            <person name="Madan Babu M."/>
            <person name="Madera M."/>
            <person name="Marchionni L."/>
            <person name="Matsuda H."/>
            <person name="Matsuzawa S."/>
            <person name="Miki H."/>
            <person name="Mignone F."/>
            <person name="Miyake S."/>
            <person name="Morris K."/>
            <person name="Mottagui-Tabar S."/>
            <person name="Mulder N."/>
            <person name="Nakano N."/>
            <person name="Nakauchi H."/>
            <person name="Ng P."/>
            <person name="Nilsson R."/>
            <person name="Nishiguchi S."/>
            <person name="Nishikawa S."/>
            <person name="Nori F."/>
            <person name="Ohara O."/>
            <person name="Okazaki Y."/>
            <person name="Orlando V."/>
            <person name="Pang K.C."/>
            <person name="Pavan W.J."/>
            <person name="Pavesi G."/>
            <person name="Pesole G."/>
            <person name="Petrovsky N."/>
            <person name="Piazza S."/>
            <person name="Reed J."/>
            <person name="Reid J.F."/>
            <person name="Ring B.Z."/>
            <person name="Ringwald M."/>
            <person name="Rost B."/>
            <person name="Ruan Y."/>
            <person name="Salzberg S.L."/>
            <person name="Sandelin A."/>
            <person name="Schneider C."/>
            <person name="Schoenbach C."/>
            <person name="Sekiguchi K."/>
            <person name="Semple C.A."/>
            <person name="Seno S."/>
            <person name="Sessa L."/>
            <person name="Sheng Y."/>
            <person name="Shibata Y."/>
            <person name="Shimada H."/>
            <person name="Shimada K."/>
            <person name="Silva D."/>
            <person name="Sinclair B."/>
            <person name="Sperling S."/>
            <person name="Stupka E."/>
            <person name="Sugiura K."/>
            <person name="Sultana R."/>
            <person name="Takenaka Y."/>
            <person name="Taki K."/>
            <person name="Tammoja K."/>
            <person name="Tan S.L."/>
            <person name="Tang S."/>
            <person name="Taylor M.S."/>
            <person name="Tegner J."/>
            <person name="Teichmann S.A."/>
            <person name="Ueda H.R."/>
            <person name="van Nimwegen E."/>
            <person name="Verardo R."/>
            <person name="Wei C.L."/>
            <person name="Yagi K."/>
            <person name="Yamanishi H."/>
            <person name="Zabarovsky E."/>
            <person name="Zhu S."/>
            <person name="Zimmer A."/>
            <person name="Hide W."/>
            <person name="Bult C."/>
            <person name="Grimmond S.M."/>
            <person name="Teasdale R.D."/>
            <person name="Liu E.T."/>
            <person name="Brusic V."/>
            <person name="Quackenbush J."/>
            <person name="Wahlestedt C."/>
            <person name="Mattick J.S."/>
            <person name="Hume D.A."/>
            <person name="Kai C."/>
            <person name="Sasaki D."/>
            <person name="Tomaru Y."/>
            <person name="Fukuda S."/>
            <person name="Kanamori-Katayama M."/>
            <person name="Suzuki M."/>
            <person name="Aoki J."/>
            <person name="Arakawa T."/>
            <person name="Iida J."/>
            <person name="Imamura K."/>
            <person name="Itoh M."/>
            <person name="Kato T."/>
            <person name="Kawaji H."/>
            <person name="Kawagashira N."/>
            <person name="Kawashima T."/>
            <person name="Kojima M."/>
            <person name="Kondo S."/>
            <person name="Konno H."/>
            <person name="Nakano K."/>
            <person name="Ninomiya N."/>
            <person name="Nishio T."/>
            <person name="Okada M."/>
            <person name="Plessy C."/>
            <person name="Shibata K."/>
            <person name="Shiraki T."/>
            <person name="Suzuki S."/>
            <person name="Tagami M."/>
            <person name="Waki K."/>
            <person name="Watahiki A."/>
            <person name="Okamura-Oho Y."/>
            <person name="Suzuki H."/>
            <person name="Kawai J."/>
            <person name="Hayashizaki Y."/>
        </authorList>
    </citation>
    <scope>NUCLEOTIDE SEQUENCE [LARGE SCALE MRNA] (ISOFORM 2)</scope>
    <source>
        <strain>C57BL/6J</strain>
        <tissue>Head</tissue>
    </source>
</reference>
<reference key="3">
    <citation type="journal article" date="2004" name="Genome Res.">
        <title>The status, quality, and expansion of the NIH full-length cDNA project: the Mammalian Gene Collection (MGC).</title>
        <authorList>
            <consortium name="The MGC Project Team"/>
        </authorList>
    </citation>
    <scope>NUCLEOTIDE SEQUENCE [LARGE SCALE MRNA] (ISOFORM 1)</scope>
    <source>
        <tissue>Eye</tissue>
    </source>
</reference>
<reference key="4">
    <citation type="journal article" date="2010" name="Cell">
        <title>A tissue-specific atlas of mouse protein phosphorylation and expression.</title>
        <authorList>
            <person name="Huttlin E.L."/>
            <person name="Jedrychowski M.P."/>
            <person name="Elias J.E."/>
            <person name="Goswami T."/>
            <person name="Rad R."/>
            <person name="Beausoleil S.A."/>
            <person name="Villen J."/>
            <person name="Haas W."/>
            <person name="Sowa M.E."/>
            <person name="Gygi S.P."/>
        </authorList>
    </citation>
    <scope>PHOSPHORYLATION [LARGE SCALE ANALYSIS] AT SER-468 AND THR-473</scope>
    <scope>IDENTIFICATION BY MASS SPECTROMETRY [LARGE SCALE ANALYSIS]</scope>
    <source>
        <tissue>Brain</tissue>
        <tissue>Heart</tissue>
        <tissue>Kidney</tissue>
        <tissue>Lung</tissue>
    </source>
</reference>
<reference key="5">
    <citation type="journal article" date="2006" name="Proc. Natl. Acad. Sci. U.S.A.">
        <title>Ric-8B promotes functional expression of odorant receptors.</title>
        <authorList>
            <person name="Von Dannecker L.E."/>
            <person name="Mercadante A.F."/>
            <person name="Malnic B."/>
        </authorList>
    </citation>
    <scope>FUNCTION</scope>
    <scope>SUBCELLULAR LOCATION</scope>
    <scope>INTERACTION WITH GNAL</scope>
</reference>
<reference key="6">
    <citation type="journal article" date="2011" name="J. Biol. Chem.">
        <title>Ric-8B is a GTP-dependent G protein alphas guanine nucleotide exchange factor.</title>
        <authorList>
            <person name="Chan P."/>
            <person name="Gabay M."/>
            <person name="Wright F.A."/>
            <person name="Tall G.G."/>
        </authorList>
    </citation>
    <scope>FUNCTION</scope>
    <scope>INTERACTION WITH GNAL AND GNAS</scope>
</reference>
<reference key="7">
    <citation type="journal article" date="2011" name="Sci. Signal.">
        <title>Ric-8 proteins are molecular chaperones that direct nascent G protein alpha subunit membrane association.</title>
        <authorList>
            <person name="Gabay M."/>
            <person name="Pinter M.E."/>
            <person name="Wright F.A."/>
            <person name="Chan P."/>
            <person name="Murphy A.J."/>
            <person name="Valenzuela D.M."/>
            <person name="Yancopoulos G.D."/>
            <person name="Tall G.G."/>
        </authorList>
    </citation>
    <scope>FUNCTION</scope>
    <scope>SUBCELLULAR LOCATION</scope>
    <scope>DISRUPTION PHENOTYPE</scope>
</reference>
<reference key="8">
    <citation type="journal article" date="2017" name="J. Neurosci.">
        <title>Conditional deletion of Ric-8b in olfactory sensory neurons leads to olfactory impairment.</title>
        <authorList>
            <person name="Machado C.F."/>
            <person name="Nagai M.H."/>
            <person name="Lyra C.S."/>
            <person name="Reis-Silva T.M."/>
            <person name="Xavier A.M."/>
            <person name="Glezer I."/>
            <person name="Felicio L.F."/>
            <person name="Malnic B."/>
        </authorList>
    </citation>
    <scope>FUNCTION</scope>
    <scope>DISRUPTION PHENOTYPE</scope>
</reference>
<reference evidence="11 12" key="9">
    <citation type="journal article" date="2023" name="Structure">
        <title>Structures of Ric-8B in complex with Galpha protein folding clients reveal isoform specificity mechanisms.</title>
        <authorList>
            <person name="Papasergi-Scott M.M."/>
            <person name="Kwarcinski F.E."/>
            <person name="Yu M."/>
            <person name="Panova O."/>
            <person name="Ovrutsky A.M."/>
            <person name="Skiniotis G."/>
            <person name="Tall G.G."/>
        </authorList>
    </citation>
    <scope>STRUCTURE BY ELECTRON MICROSCOPY (2.80 ANGSTROMS) IN COMPLEX WITH GNAL AND GNAS</scope>
    <scope>FUNCTION</scope>
    <scope>MUTAGENESIS OF ARG-71; ARG-75; ASN-123; PHE-126; PHE-163; ARG-166; GLU-400; ALA-449 AND ALA-453</scope>
    <scope>INTERACTION WITH GNAL AND GNAS</scope>
</reference>
<name>RIC8B_MOUSE</name>
<evidence type="ECO:0000269" key="1">
    <source>
    </source>
</evidence>
<evidence type="ECO:0000269" key="2">
    <source>
    </source>
</evidence>
<evidence type="ECO:0000269" key="3">
    <source>
    </source>
</evidence>
<evidence type="ECO:0000269" key="4">
    <source>
    </source>
</evidence>
<evidence type="ECO:0000269" key="5">
    <source>
    </source>
</evidence>
<evidence type="ECO:0000269" key="6">
    <source>
    </source>
</evidence>
<evidence type="ECO:0000303" key="7">
    <source>
    </source>
</evidence>
<evidence type="ECO:0000303" key="8">
    <source>
    </source>
</evidence>
<evidence type="ECO:0000305" key="9"/>
<evidence type="ECO:0000312" key="10">
    <source>
        <dbReference type="MGI" id="MGI:2682307"/>
    </source>
</evidence>
<evidence type="ECO:0007744" key="11">
    <source>
        <dbReference type="PDB" id="8EL7"/>
    </source>
</evidence>
<evidence type="ECO:0007744" key="12">
    <source>
        <dbReference type="PDB" id="8EL8"/>
    </source>
</evidence>
<evidence type="ECO:0007744" key="13">
    <source>
    </source>
</evidence>
<evidence type="ECO:0007829" key="14">
    <source>
        <dbReference type="PDB" id="8EL7"/>
    </source>
</evidence>
<evidence type="ECO:0007829" key="15">
    <source>
        <dbReference type="PDB" id="8EL8"/>
    </source>
</evidence>
<keyword id="KW-0002">3D-structure</keyword>
<keyword id="KW-0025">Alternative splicing</keyword>
<keyword id="KW-0143">Chaperone</keyword>
<keyword id="KW-0963">Cytoplasm</keyword>
<keyword id="KW-0344">Guanine-nucleotide releasing factor</keyword>
<keyword id="KW-0597">Phosphoprotein</keyword>
<keyword id="KW-1185">Reference proteome</keyword>
<accession>Q80XE1</accession>
<accession>Q58L65</accession>
<protein>
    <recommendedName>
        <fullName evidence="9">Chaperone Ric-8B</fullName>
    </recommendedName>
    <alternativeName>
        <fullName>Synembryn-B</fullName>
    </alternativeName>
</protein>
<sequence>MDEERALYIVRAGEAGAIERVLRDYSDKHRATFKFESADEDKRKKLCEGIFKVLVKEVPTTCQVSCLEVLRILSRDKKILVPVTTKENMQILLRLAKLHESDDSLEKVSEFPVIVESLKCLCNIVFNSQMAQQLSLELNLAAKLCNLLRKCKDRKFINDIKCFDLRLLFVLSLLHTDIRSQLRYELQGLPLLTQILESAFSIKWTDEYESAIDHNGPPLSPQETDCAIEALKALFNVTVDSWKVHKESDSHQFRVMAAVLRHCLLIVGPTEDKTEELHSNAVNLLSNVPVSCLDVLICPLTHEETAQEAATLDELPSDKTTEKDTALKNSTMVYNGMNMEAIHVLLNFMEKRIDKGSSYREGLTPVLSLLTECSRAHRNIRKFLKDQVLPPLRDVTNRPEVGSTVRNKLVRLMTHVDLGVKQIAAEFLFVLCKERVDSLLKYTGYGNAAGLLAARGLLAGGRGDNWYSEDEDTDTEEYKNAKPKEELLKPMGLKPDGTITPLEEALSQYSVIEETSSDTD</sequence>
<proteinExistence type="evidence at protein level"/>
<organism>
    <name type="scientific">Mus musculus</name>
    <name type="common">Mouse</name>
    <dbReference type="NCBI Taxonomy" id="10090"/>
    <lineage>
        <taxon>Eukaryota</taxon>
        <taxon>Metazoa</taxon>
        <taxon>Chordata</taxon>
        <taxon>Craniata</taxon>
        <taxon>Vertebrata</taxon>
        <taxon>Euteleostomi</taxon>
        <taxon>Mammalia</taxon>
        <taxon>Eutheria</taxon>
        <taxon>Euarchontoglires</taxon>
        <taxon>Glires</taxon>
        <taxon>Rodentia</taxon>
        <taxon>Myomorpha</taxon>
        <taxon>Muroidea</taxon>
        <taxon>Muridae</taxon>
        <taxon>Murinae</taxon>
        <taxon>Mus</taxon>
        <taxon>Mus</taxon>
    </lineage>
</organism>
<dbReference type="EMBL" id="AY940666">
    <property type="protein sequence ID" value="AAX46315.1"/>
    <property type="molecule type" value="mRNA"/>
</dbReference>
<dbReference type="EMBL" id="AY940667">
    <property type="protein sequence ID" value="AAX46316.1"/>
    <property type="molecule type" value="mRNA"/>
</dbReference>
<dbReference type="EMBL" id="AK132369">
    <property type="protein sequence ID" value="BAE21130.1"/>
    <property type="molecule type" value="mRNA"/>
</dbReference>
<dbReference type="EMBL" id="BC051080">
    <property type="protein sequence ID" value="AAH51080.1"/>
    <property type="molecule type" value="mRNA"/>
</dbReference>
<dbReference type="CCDS" id="CCDS24084.1">
    <molecule id="Q80XE1-2"/>
</dbReference>
<dbReference type="CCDS" id="CCDS24085.1">
    <molecule id="Q80XE1-1"/>
</dbReference>
<dbReference type="RefSeq" id="NP_001013459.1">
    <molecule id="Q80XE1-2"/>
    <property type="nucleotide sequence ID" value="NM_001013441.2"/>
</dbReference>
<dbReference type="RefSeq" id="NP_898995.1">
    <molecule id="Q80XE1-1"/>
    <property type="nucleotide sequence ID" value="NM_183172.2"/>
</dbReference>
<dbReference type="PDB" id="8EL7">
    <property type="method" value="EM"/>
    <property type="resolution" value="2.80 A"/>
    <property type="chains" value="B=1-520"/>
</dbReference>
<dbReference type="PDB" id="8EL8">
    <property type="method" value="EM"/>
    <property type="resolution" value="3.20 A"/>
    <property type="chains" value="B=1-520"/>
</dbReference>
<dbReference type="PDBsum" id="8EL7"/>
<dbReference type="PDBsum" id="8EL8"/>
<dbReference type="EMDB" id="EMD-28223"/>
<dbReference type="EMDB" id="EMD-28224"/>
<dbReference type="SMR" id="Q80XE1"/>
<dbReference type="BioGRID" id="231877">
    <property type="interactions" value="7"/>
</dbReference>
<dbReference type="FunCoup" id="Q80XE1">
    <property type="interactions" value="2864"/>
</dbReference>
<dbReference type="STRING" id="10090.ENSMUSP00000046981"/>
<dbReference type="iPTMnet" id="Q80XE1"/>
<dbReference type="PhosphoSitePlus" id="Q80XE1"/>
<dbReference type="SwissPalm" id="Q80XE1"/>
<dbReference type="jPOST" id="Q80XE1"/>
<dbReference type="PaxDb" id="10090-ENSMUSP00000046981"/>
<dbReference type="PeptideAtlas" id="Q80XE1"/>
<dbReference type="ProteomicsDB" id="253132">
    <molecule id="Q80XE1-2"/>
</dbReference>
<dbReference type="ProteomicsDB" id="253133">
    <molecule id="Q80XE1-1"/>
</dbReference>
<dbReference type="Pumba" id="Q80XE1"/>
<dbReference type="Antibodypedia" id="45122">
    <property type="antibodies" value="64 antibodies from 17 providers"/>
</dbReference>
<dbReference type="DNASU" id="237422"/>
<dbReference type="Ensembl" id="ENSMUST00000038523.15">
    <molecule id="Q80XE1-1"/>
    <property type="protein sequence ID" value="ENSMUSP00000046981.8"/>
    <property type="gene ID" value="ENSMUSG00000035620.16"/>
</dbReference>
<dbReference type="Ensembl" id="ENSMUST00000095385.5">
    <molecule id="Q80XE1-2"/>
    <property type="protein sequence ID" value="ENSMUSP00000093032.4"/>
    <property type="gene ID" value="ENSMUSG00000035620.16"/>
</dbReference>
<dbReference type="GeneID" id="237422"/>
<dbReference type="KEGG" id="mmu:237422"/>
<dbReference type="UCSC" id="uc007gkx.2">
    <molecule id="Q80XE1-1"/>
    <property type="organism name" value="mouse"/>
</dbReference>
<dbReference type="UCSC" id="uc007gky.2">
    <molecule id="Q80XE1-2"/>
    <property type="organism name" value="mouse"/>
</dbReference>
<dbReference type="AGR" id="MGI:2682307"/>
<dbReference type="CTD" id="55188"/>
<dbReference type="MGI" id="MGI:2682307">
    <property type="gene designation" value="Ric8b"/>
</dbReference>
<dbReference type="VEuPathDB" id="HostDB:ENSMUSG00000035620"/>
<dbReference type="eggNOG" id="KOG4464">
    <property type="taxonomic scope" value="Eukaryota"/>
</dbReference>
<dbReference type="GeneTree" id="ENSGT00390000014700"/>
<dbReference type="HOGENOM" id="CLU_018602_1_0_1"/>
<dbReference type="InParanoid" id="Q80XE1"/>
<dbReference type="OMA" id="ETLCDPP"/>
<dbReference type="OrthoDB" id="38762at9989"/>
<dbReference type="PhylomeDB" id="Q80XE1"/>
<dbReference type="TreeFam" id="TF314907"/>
<dbReference type="BioGRID-ORCS" id="237422">
    <property type="hits" value="5 hits in 77 CRISPR screens"/>
</dbReference>
<dbReference type="ChiTaRS" id="Ric8b">
    <property type="organism name" value="mouse"/>
</dbReference>
<dbReference type="PRO" id="PR:Q80XE1"/>
<dbReference type="Proteomes" id="UP000000589">
    <property type="component" value="Chromosome 10"/>
</dbReference>
<dbReference type="RNAct" id="Q80XE1">
    <property type="molecule type" value="protein"/>
</dbReference>
<dbReference type="Bgee" id="ENSMUSG00000035620">
    <property type="expression patterns" value="Expressed in olfactory epithelium and 225 other cell types or tissues"/>
</dbReference>
<dbReference type="ExpressionAtlas" id="Q80XE1">
    <property type="expression patterns" value="baseline and differential"/>
</dbReference>
<dbReference type="GO" id="GO:0005938">
    <property type="term" value="C:cell cortex"/>
    <property type="evidence" value="ECO:0007669"/>
    <property type="project" value="UniProtKB-SubCell"/>
</dbReference>
<dbReference type="GO" id="GO:0005813">
    <property type="term" value="C:centrosome"/>
    <property type="evidence" value="ECO:0007669"/>
    <property type="project" value="Ensembl"/>
</dbReference>
<dbReference type="GO" id="GO:0005829">
    <property type="term" value="C:cytosol"/>
    <property type="evidence" value="ECO:0007669"/>
    <property type="project" value="Ensembl"/>
</dbReference>
<dbReference type="GO" id="GO:0005886">
    <property type="term" value="C:plasma membrane"/>
    <property type="evidence" value="ECO:0000314"/>
    <property type="project" value="UniProtKB"/>
</dbReference>
<dbReference type="GO" id="GO:0001965">
    <property type="term" value="F:G-protein alpha-subunit binding"/>
    <property type="evidence" value="ECO:0000314"/>
    <property type="project" value="UniProtKB"/>
</dbReference>
<dbReference type="GO" id="GO:0005085">
    <property type="term" value="F:guanyl-nucleotide exchange factor activity"/>
    <property type="evidence" value="ECO:0000314"/>
    <property type="project" value="UniProtKB"/>
</dbReference>
<dbReference type="GO" id="GO:0044183">
    <property type="term" value="F:protein folding chaperone"/>
    <property type="evidence" value="ECO:0000314"/>
    <property type="project" value="UniProtKB"/>
</dbReference>
<dbReference type="GO" id="GO:0007186">
    <property type="term" value="P:G protein-coupled receptor signaling pathway"/>
    <property type="evidence" value="ECO:0000314"/>
    <property type="project" value="UniProtKB"/>
</dbReference>
<dbReference type="GO" id="GO:0007608">
    <property type="term" value="P:sensory perception of smell"/>
    <property type="evidence" value="ECO:0000314"/>
    <property type="project" value="UniProtKB"/>
</dbReference>
<dbReference type="Gene3D" id="1.25.10.10">
    <property type="entry name" value="Leucine-rich Repeat Variant"/>
    <property type="match status" value="1"/>
</dbReference>
<dbReference type="InterPro" id="IPR011989">
    <property type="entry name" value="ARM-like"/>
</dbReference>
<dbReference type="InterPro" id="IPR016024">
    <property type="entry name" value="ARM-type_fold"/>
</dbReference>
<dbReference type="InterPro" id="IPR008376">
    <property type="entry name" value="Chaperone_Ric-8_A/B"/>
</dbReference>
<dbReference type="InterPro" id="IPR019318">
    <property type="entry name" value="Gua_nucleotide_exch_fac_Ric8"/>
</dbReference>
<dbReference type="PANTHER" id="PTHR12425">
    <property type="entry name" value="SYNEMBRYN"/>
    <property type="match status" value="1"/>
</dbReference>
<dbReference type="PANTHER" id="PTHR12425:SF2">
    <property type="entry name" value="SYNEMBRYN-B"/>
    <property type="match status" value="1"/>
</dbReference>
<dbReference type="Pfam" id="PF10165">
    <property type="entry name" value="Ric8"/>
    <property type="match status" value="1"/>
</dbReference>
<dbReference type="PRINTS" id="PR01802">
    <property type="entry name" value="SYNEMBRYN"/>
</dbReference>
<dbReference type="SUPFAM" id="SSF48371">
    <property type="entry name" value="ARM repeat"/>
    <property type="match status" value="1"/>
</dbReference>